<reference key="1">
    <citation type="submission" date="1992-03" db="EMBL/GenBank/DDBJ databases">
        <authorList>
            <person name="Manenti G."/>
            <person name="Gariboldi M."/>
            <person name="Pierotti M.A."/>
            <person name="della Porta G."/>
            <person name="Dragani T.A."/>
        </authorList>
    </citation>
    <scope>NUCLEOTIDE SEQUENCE [MRNA]</scope>
    <source>
        <strain>C3HF</strain>
        <tissue>Liver</tissue>
    </source>
</reference>
<reference key="2">
    <citation type="journal article" date="2004" name="Genome Res.">
        <title>The status, quality, and expansion of the NIH full-length cDNA project: the Mammalian Gene Collection (MGC).</title>
        <authorList>
            <consortium name="The MGC Project Team"/>
        </authorList>
    </citation>
    <scope>NUCLEOTIDE SEQUENCE [LARGE SCALE MRNA]</scope>
    <source>
        <strain>FVB/N</strain>
        <tissue>Mammary gland</tissue>
    </source>
</reference>
<reference key="3">
    <citation type="journal article" date="1992" name="Electrophoresis">
        <title>Mouse liver protein database: a catalog of proteins detected by two-dimensional gel electrophoresis.</title>
        <authorList>
            <person name="Giometti C.S."/>
            <person name="Taylor J."/>
            <person name="Tollaksen S.L."/>
        </authorList>
    </citation>
    <scope>PROTEIN SEQUENCE OF 26-45</scope>
    <source>
        <tissue>Liver</tissue>
    </source>
</reference>
<reference key="4">
    <citation type="submission" date="2007-07" db="UniProtKB">
        <authorList>
            <person name="Lubec G."/>
            <person name="Yang J.W."/>
            <person name="Zigmond M."/>
        </authorList>
    </citation>
    <scope>PROTEIN SEQUENCE OF 170-180</scope>
    <source>
        <tissue>Brain</tissue>
    </source>
</reference>
<reference key="5">
    <citation type="journal article" date="2010" name="Cell">
        <title>A tissue-specific atlas of mouse protein phosphorylation and expression.</title>
        <authorList>
            <person name="Huttlin E.L."/>
            <person name="Jedrychowski M.P."/>
            <person name="Elias J.E."/>
            <person name="Goswami T."/>
            <person name="Rad R."/>
            <person name="Beausoleil S.A."/>
            <person name="Villen J."/>
            <person name="Haas W."/>
            <person name="Sowa M.E."/>
            <person name="Gygi S.P."/>
        </authorList>
    </citation>
    <scope>IDENTIFICATION BY MASS SPECTROMETRY [LARGE SCALE ANALYSIS]</scope>
    <source>
        <tissue>Brain</tissue>
        <tissue>Brown adipose tissue</tissue>
        <tissue>Heart</tissue>
        <tissue>Kidney</tissue>
        <tissue>Liver</tissue>
        <tissue>Lung</tissue>
        <tissue>Pancreas</tissue>
        <tissue>Spleen</tissue>
        <tissue>Testis</tissue>
    </source>
</reference>
<reference key="6">
    <citation type="journal article" date="2013" name="Mol. Cell">
        <title>SIRT5-mediated lysine desuccinylation impacts diverse metabolic pathways.</title>
        <authorList>
            <person name="Park J."/>
            <person name="Chen Y."/>
            <person name="Tishkoff D.X."/>
            <person name="Peng C."/>
            <person name="Tan M."/>
            <person name="Dai L."/>
            <person name="Xie Z."/>
            <person name="Zhang Y."/>
            <person name="Zwaans B.M."/>
            <person name="Skinner M.E."/>
            <person name="Lombard D.B."/>
            <person name="Zhao Y."/>
        </authorList>
    </citation>
    <scope>SUCCINYLATION [LARGE SCALE ANALYSIS] AT LYS-102; LYS-107; LYS-362 AND LYS-405</scope>
    <scope>IDENTIFICATION BY MASS SPECTROMETRY [LARGE SCALE ANALYSIS]</scope>
    <source>
        <tissue>Liver</tissue>
    </source>
</reference>
<reference key="7">
    <citation type="journal article" date="2013" name="Proc. Natl. Acad. Sci. U.S.A.">
        <title>Label-free quantitative proteomics of the lysine acetylome in mitochondria identifies substrates of SIRT3 in metabolic pathways.</title>
        <authorList>
            <person name="Rardin M.J."/>
            <person name="Newman J.C."/>
            <person name="Held J.M."/>
            <person name="Cusack M.P."/>
            <person name="Sorensen D.J."/>
            <person name="Li B."/>
            <person name="Schilling B."/>
            <person name="Mooney S.D."/>
            <person name="Kahn C.R."/>
            <person name="Verdin E."/>
            <person name="Gibson B.W."/>
        </authorList>
    </citation>
    <scope>ACETYLATION [LARGE SCALE ANALYSIS] AT LYS-49; LYS-66; LYS-107; LYS-362; LYS-386; LYS-392; LYS-405 AND LYS-421</scope>
    <scope>IDENTIFICATION BY MASS SPECTROMETRY [LARGE SCALE ANALYSIS]</scope>
    <source>
        <tissue>Liver</tissue>
    </source>
</reference>
<sequence>MLSKLASLQTIAALRRGVHTSVASATSVATKKTEQGPPSSEYIFERESKYGAHNYHPLPVALERGKGIYMWDVEGRQYFDFLSAYGAVSQGHCHPKIIDAMKSQVDKLTLTSRAFYNNVLGEYEEYITKLFNYNKVLPMNTGVEAGETACKLARRWGYTVKGIQKYKAKIVFADGNFWGRTLSAISSSTDPTSYDGFGPFMPGFETIPYNDLPALERALQDPNVAAFMVEPIQGEAGVIVPDPGYLTGVRELCTRHQVLFIADEIQTGLARTGRWLAVDHENVRPDMVLLGKALSGGLYPVSAVLCDDEIMLTIKPGEHGSTYGGNPLGCRIAIAALEVLEEENLAENADKMGAILRKELMKLPSDVVTSVRGKGLLNAIVIRETKDCDAWKVCLRLRDNGLLAKPTHGDIIRLAPPLVIKEDEIRESVEIINKTILSF</sequence>
<protein>
    <recommendedName>
        <fullName>Ornithine aminotransferase, mitochondrial</fullName>
        <ecNumber evidence="2">2.6.1.13</ecNumber>
    </recommendedName>
    <alternativeName>
        <fullName>Ornithine--oxo-acid aminotransferase</fullName>
    </alternativeName>
</protein>
<comment type="function">
    <text evidence="2">Catalyzes the reversible interconversion of L-ornithine and 2-oxoglutarate to L-glutamate semialdehyde and L-glutamate.</text>
</comment>
<comment type="catalytic activity">
    <reaction evidence="2">
        <text>L-ornithine + 2-oxoglutarate = L-glutamate 5-semialdehyde + L-glutamate</text>
        <dbReference type="Rhea" id="RHEA:25160"/>
        <dbReference type="ChEBI" id="CHEBI:16810"/>
        <dbReference type="ChEBI" id="CHEBI:29985"/>
        <dbReference type="ChEBI" id="CHEBI:46911"/>
        <dbReference type="ChEBI" id="CHEBI:58066"/>
        <dbReference type="EC" id="2.6.1.13"/>
    </reaction>
    <physiologicalReaction direction="left-to-right" evidence="2">
        <dbReference type="Rhea" id="RHEA:25161"/>
    </physiologicalReaction>
    <physiologicalReaction direction="right-to-left" evidence="2">
        <dbReference type="Rhea" id="RHEA:25162"/>
    </physiologicalReaction>
</comment>
<comment type="cofactor">
    <cofactor>
        <name>pyridoxal 5'-phosphate</name>
        <dbReference type="ChEBI" id="CHEBI:597326"/>
    </cofactor>
</comment>
<comment type="pathway">
    <text evidence="2">Amino-acid biosynthesis; L-proline biosynthesis; L-glutamate 5-semialdehyde from L-ornithine: step 1/1.</text>
</comment>
<comment type="subunit">
    <text evidence="2">Homohexamer.</text>
</comment>
<comment type="subcellular location">
    <subcellularLocation>
        <location evidence="2">Mitochondrion matrix</location>
    </subcellularLocation>
</comment>
<comment type="similarity">
    <text evidence="4">Belongs to the class-III pyridoxal-phosphate-dependent aminotransferase family.</text>
</comment>
<proteinExistence type="evidence at protein level"/>
<name>OAT_MOUSE</name>
<evidence type="ECO:0000250" key="1"/>
<evidence type="ECO:0000250" key="2">
    <source>
        <dbReference type="UniProtKB" id="P04181"/>
    </source>
</evidence>
<evidence type="ECO:0000269" key="3">
    <source>
    </source>
</evidence>
<evidence type="ECO:0000305" key="4"/>
<evidence type="ECO:0007744" key="5">
    <source>
    </source>
</evidence>
<evidence type="ECO:0007744" key="6">
    <source>
    </source>
</evidence>
<accession>P29758</accession>
<feature type="transit peptide" description="Mitochondrion" evidence="3">
    <location>
        <begin position="1"/>
        <end position="25"/>
    </location>
</feature>
<feature type="chain" id="PRO_0000001264" description="Ornithine aminotransferase, mitochondrial">
    <location>
        <begin position="26"/>
        <end position="439"/>
    </location>
</feature>
<feature type="modified residue" description="N6-acetyllysine" evidence="5">
    <location>
        <position position="49"/>
    </location>
</feature>
<feature type="modified residue" description="N6-acetyllysine" evidence="5">
    <location>
        <position position="66"/>
    </location>
</feature>
<feature type="modified residue" description="N6-succinyllysine" evidence="6">
    <location>
        <position position="102"/>
    </location>
</feature>
<feature type="modified residue" description="N6-acetyllysine; alternate" evidence="5">
    <location>
        <position position="107"/>
    </location>
</feature>
<feature type="modified residue" description="N6-succinyllysine; alternate" evidence="6">
    <location>
        <position position="107"/>
    </location>
</feature>
<feature type="modified residue" description="N6-(pyridoxal phosphate)lysine" evidence="1">
    <location>
        <position position="292"/>
    </location>
</feature>
<feature type="modified residue" description="N6-acetyllysine; alternate" evidence="5">
    <location>
        <position position="362"/>
    </location>
</feature>
<feature type="modified residue" description="N6-succinyllysine; alternate" evidence="6">
    <location>
        <position position="362"/>
    </location>
</feature>
<feature type="modified residue" description="N6-acetyllysine" evidence="5">
    <location>
        <position position="386"/>
    </location>
</feature>
<feature type="modified residue" description="N6-acetyllysine" evidence="5">
    <location>
        <position position="392"/>
    </location>
</feature>
<feature type="modified residue" description="N6-acetyllysine; alternate" evidence="5">
    <location>
        <position position="405"/>
    </location>
</feature>
<feature type="modified residue" description="N6-succinyllysine; alternate" evidence="6">
    <location>
        <position position="405"/>
    </location>
</feature>
<feature type="modified residue" description="N6-acetyllysine" evidence="5">
    <location>
        <position position="421"/>
    </location>
</feature>
<dbReference type="EC" id="2.6.1.13" evidence="2"/>
<dbReference type="EMBL" id="X64837">
    <property type="protein sequence ID" value="CAA46049.1"/>
    <property type="molecule type" value="mRNA"/>
</dbReference>
<dbReference type="EMBL" id="BC008119">
    <property type="protein sequence ID" value="AAH08119.1"/>
    <property type="molecule type" value="mRNA"/>
</dbReference>
<dbReference type="CCDS" id="CCDS21923.1"/>
<dbReference type="PIR" id="S19937">
    <property type="entry name" value="XNMSO"/>
</dbReference>
<dbReference type="RefSeq" id="NP_058674.1">
    <property type="nucleotide sequence ID" value="NM_016978.2"/>
</dbReference>
<dbReference type="SMR" id="P29758"/>
<dbReference type="BioGRID" id="201887">
    <property type="interactions" value="12"/>
</dbReference>
<dbReference type="FunCoup" id="P29758">
    <property type="interactions" value="2611"/>
</dbReference>
<dbReference type="IntAct" id="P29758">
    <property type="interactions" value="2"/>
</dbReference>
<dbReference type="STRING" id="10090.ENSMUSP00000081544"/>
<dbReference type="ChEMBL" id="CHEMBL1075297"/>
<dbReference type="CarbonylDB" id="P29758"/>
<dbReference type="GlyGen" id="P29758">
    <property type="glycosylation" value="1 site, 1 O-linked glycan (1 site)"/>
</dbReference>
<dbReference type="iPTMnet" id="P29758"/>
<dbReference type="MetOSite" id="P29758"/>
<dbReference type="PhosphoSitePlus" id="P29758"/>
<dbReference type="SwissPalm" id="P29758"/>
<dbReference type="REPRODUCTION-2DPAGE" id="IPI00129178"/>
<dbReference type="REPRODUCTION-2DPAGE" id="P29758"/>
<dbReference type="jPOST" id="P29758"/>
<dbReference type="PaxDb" id="10090-ENSMUSP00000081544"/>
<dbReference type="PeptideAtlas" id="P29758"/>
<dbReference type="ProteomicsDB" id="294263"/>
<dbReference type="Pumba" id="P29758"/>
<dbReference type="Antibodypedia" id="32371">
    <property type="antibodies" value="256 antibodies from 32 providers"/>
</dbReference>
<dbReference type="DNASU" id="18242"/>
<dbReference type="Ensembl" id="ENSMUST00000084500.8">
    <property type="protein sequence ID" value="ENSMUSP00000081544.7"/>
    <property type="gene ID" value="ENSMUSG00000030934.10"/>
</dbReference>
<dbReference type="GeneID" id="18242"/>
<dbReference type="KEGG" id="mmu:18242"/>
<dbReference type="UCSC" id="uc009kcb.1">
    <property type="organism name" value="mouse"/>
</dbReference>
<dbReference type="AGR" id="MGI:97394"/>
<dbReference type="CTD" id="4942"/>
<dbReference type="MGI" id="MGI:97394">
    <property type="gene designation" value="Oat"/>
</dbReference>
<dbReference type="VEuPathDB" id="HostDB:ENSMUSG00000030934"/>
<dbReference type="eggNOG" id="KOG1402">
    <property type="taxonomic scope" value="Eukaryota"/>
</dbReference>
<dbReference type="GeneTree" id="ENSGT00630000089895"/>
<dbReference type="HOGENOM" id="CLU_016922_10_3_1"/>
<dbReference type="InParanoid" id="P29758"/>
<dbReference type="OMA" id="RSAWDLC"/>
<dbReference type="OrthoDB" id="425114at2759"/>
<dbReference type="PhylomeDB" id="P29758"/>
<dbReference type="TreeFam" id="TF105720"/>
<dbReference type="BRENDA" id="2.6.1.13">
    <property type="organism ID" value="3474"/>
</dbReference>
<dbReference type="Reactome" id="R-MMU-8964539">
    <property type="pathway name" value="Glutamate and glutamine metabolism"/>
</dbReference>
<dbReference type="UniPathway" id="UPA00098">
    <property type="reaction ID" value="UER00358"/>
</dbReference>
<dbReference type="BioGRID-ORCS" id="18242">
    <property type="hits" value="2 hits in 79 CRISPR screens"/>
</dbReference>
<dbReference type="ChiTaRS" id="Oat">
    <property type="organism name" value="mouse"/>
</dbReference>
<dbReference type="PRO" id="PR:P29758"/>
<dbReference type="Proteomes" id="UP000000589">
    <property type="component" value="Chromosome 7"/>
</dbReference>
<dbReference type="RNAct" id="P29758">
    <property type="molecule type" value="protein"/>
</dbReference>
<dbReference type="Bgee" id="ENSMUSG00000030934">
    <property type="expression patterns" value="Expressed in migratory enteric neural crest cell and 268 other cell types or tissues"/>
</dbReference>
<dbReference type="ExpressionAtlas" id="P29758">
    <property type="expression patterns" value="baseline and differential"/>
</dbReference>
<dbReference type="GO" id="GO:0005759">
    <property type="term" value="C:mitochondrial matrix"/>
    <property type="evidence" value="ECO:0000250"/>
    <property type="project" value="UniProtKB"/>
</dbReference>
<dbReference type="GO" id="GO:0005739">
    <property type="term" value="C:mitochondrion"/>
    <property type="evidence" value="ECO:0007005"/>
    <property type="project" value="MGI"/>
</dbReference>
<dbReference type="GO" id="GO:0005654">
    <property type="term" value="C:nucleoplasm"/>
    <property type="evidence" value="ECO:0007669"/>
    <property type="project" value="Ensembl"/>
</dbReference>
<dbReference type="GO" id="GO:0042802">
    <property type="term" value="F:identical protein binding"/>
    <property type="evidence" value="ECO:0000250"/>
    <property type="project" value="UniProtKB"/>
</dbReference>
<dbReference type="GO" id="GO:0004587">
    <property type="term" value="F:ornithine aminotransferase activity"/>
    <property type="evidence" value="ECO:0000250"/>
    <property type="project" value="UniProtKB"/>
</dbReference>
<dbReference type="GO" id="GO:0030170">
    <property type="term" value="F:pyridoxal phosphate binding"/>
    <property type="evidence" value="ECO:0007669"/>
    <property type="project" value="InterPro"/>
</dbReference>
<dbReference type="GO" id="GO:0055129">
    <property type="term" value="P:L-proline biosynthetic process"/>
    <property type="evidence" value="ECO:0007669"/>
    <property type="project" value="UniProtKB-UniPathway"/>
</dbReference>
<dbReference type="CDD" id="cd00610">
    <property type="entry name" value="OAT_like"/>
    <property type="match status" value="1"/>
</dbReference>
<dbReference type="FunFam" id="3.40.640.10:FF:000011">
    <property type="entry name" value="Ornithine aminotransferase"/>
    <property type="match status" value="1"/>
</dbReference>
<dbReference type="FunFam" id="3.90.1150.10:FF:000152">
    <property type="entry name" value="Ornithine aminotransferase"/>
    <property type="match status" value="1"/>
</dbReference>
<dbReference type="Gene3D" id="3.90.1150.10">
    <property type="entry name" value="Aspartate Aminotransferase, domain 1"/>
    <property type="match status" value="1"/>
</dbReference>
<dbReference type="Gene3D" id="3.40.640.10">
    <property type="entry name" value="Type I PLP-dependent aspartate aminotransferase-like (Major domain)"/>
    <property type="match status" value="1"/>
</dbReference>
<dbReference type="InterPro" id="IPR005814">
    <property type="entry name" value="Aminotrans_3"/>
</dbReference>
<dbReference type="InterPro" id="IPR049704">
    <property type="entry name" value="Aminotrans_3_PPA_site"/>
</dbReference>
<dbReference type="InterPro" id="IPR050103">
    <property type="entry name" value="Class-III_PLP-dep_AT"/>
</dbReference>
<dbReference type="InterPro" id="IPR010164">
    <property type="entry name" value="Orn_aminotrans"/>
</dbReference>
<dbReference type="InterPro" id="IPR015424">
    <property type="entry name" value="PyrdxlP-dep_Trfase"/>
</dbReference>
<dbReference type="InterPro" id="IPR015421">
    <property type="entry name" value="PyrdxlP-dep_Trfase_major"/>
</dbReference>
<dbReference type="InterPro" id="IPR015422">
    <property type="entry name" value="PyrdxlP-dep_Trfase_small"/>
</dbReference>
<dbReference type="NCBIfam" id="TIGR01885">
    <property type="entry name" value="Orn_aminotrans"/>
    <property type="match status" value="1"/>
</dbReference>
<dbReference type="PANTHER" id="PTHR11986">
    <property type="entry name" value="AMINOTRANSFERASE CLASS III"/>
    <property type="match status" value="1"/>
</dbReference>
<dbReference type="PANTHER" id="PTHR11986:SF18">
    <property type="entry name" value="ORNITHINE AMINOTRANSFERASE, MITOCHONDRIAL"/>
    <property type="match status" value="1"/>
</dbReference>
<dbReference type="Pfam" id="PF00202">
    <property type="entry name" value="Aminotran_3"/>
    <property type="match status" value="1"/>
</dbReference>
<dbReference type="PIRSF" id="PIRSF000521">
    <property type="entry name" value="Transaminase_4ab_Lys_Orn"/>
    <property type="match status" value="1"/>
</dbReference>
<dbReference type="SUPFAM" id="SSF53383">
    <property type="entry name" value="PLP-dependent transferases"/>
    <property type="match status" value="1"/>
</dbReference>
<dbReference type="PROSITE" id="PS00600">
    <property type="entry name" value="AA_TRANSFER_CLASS_3"/>
    <property type="match status" value="1"/>
</dbReference>
<keyword id="KW-0007">Acetylation</keyword>
<keyword id="KW-0032">Aminotransferase</keyword>
<keyword id="KW-0903">Direct protein sequencing</keyword>
<keyword id="KW-0496">Mitochondrion</keyword>
<keyword id="KW-0663">Pyridoxal phosphate</keyword>
<keyword id="KW-1185">Reference proteome</keyword>
<keyword id="KW-0808">Transferase</keyword>
<keyword id="KW-0809">Transit peptide</keyword>
<organism>
    <name type="scientific">Mus musculus</name>
    <name type="common">Mouse</name>
    <dbReference type="NCBI Taxonomy" id="10090"/>
    <lineage>
        <taxon>Eukaryota</taxon>
        <taxon>Metazoa</taxon>
        <taxon>Chordata</taxon>
        <taxon>Craniata</taxon>
        <taxon>Vertebrata</taxon>
        <taxon>Euteleostomi</taxon>
        <taxon>Mammalia</taxon>
        <taxon>Eutheria</taxon>
        <taxon>Euarchontoglires</taxon>
        <taxon>Glires</taxon>
        <taxon>Rodentia</taxon>
        <taxon>Myomorpha</taxon>
        <taxon>Muroidea</taxon>
        <taxon>Muridae</taxon>
        <taxon>Murinae</taxon>
        <taxon>Mus</taxon>
        <taxon>Mus</taxon>
    </lineage>
</organism>
<gene>
    <name type="primary">Oat</name>
</gene>